<name>KUP_ANASK</name>
<organism>
    <name type="scientific">Anaeromyxobacter sp. (strain K)</name>
    <dbReference type="NCBI Taxonomy" id="447217"/>
    <lineage>
        <taxon>Bacteria</taxon>
        <taxon>Pseudomonadati</taxon>
        <taxon>Myxococcota</taxon>
        <taxon>Myxococcia</taxon>
        <taxon>Myxococcales</taxon>
        <taxon>Cystobacterineae</taxon>
        <taxon>Anaeromyxobacteraceae</taxon>
        <taxon>Anaeromyxobacter</taxon>
    </lineage>
</organism>
<gene>
    <name evidence="1" type="primary">kup</name>
    <name type="ordered locus">AnaeK_1010</name>
</gene>
<evidence type="ECO:0000255" key="1">
    <source>
        <dbReference type="HAMAP-Rule" id="MF_01522"/>
    </source>
</evidence>
<evidence type="ECO:0000256" key="2">
    <source>
        <dbReference type="SAM" id="MobiDB-lite"/>
    </source>
</evidence>
<comment type="function">
    <text evidence="1">Transport of potassium into the cell. Likely operates as a K(+):H(+) symporter.</text>
</comment>
<comment type="catalytic activity">
    <reaction evidence="1">
        <text>K(+)(in) + H(+)(in) = K(+)(out) + H(+)(out)</text>
        <dbReference type="Rhea" id="RHEA:28490"/>
        <dbReference type="ChEBI" id="CHEBI:15378"/>
        <dbReference type="ChEBI" id="CHEBI:29103"/>
    </reaction>
    <physiologicalReaction direction="right-to-left" evidence="1">
        <dbReference type="Rhea" id="RHEA:28492"/>
    </physiologicalReaction>
</comment>
<comment type="subcellular location">
    <subcellularLocation>
        <location evidence="1">Cell inner membrane</location>
        <topology evidence="1">Multi-pass membrane protein</topology>
    </subcellularLocation>
</comment>
<comment type="similarity">
    <text evidence="1">Belongs to the HAK/KUP transporter (TC 2.A.72) family.</text>
</comment>
<dbReference type="EMBL" id="CP001131">
    <property type="protein sequence ID" value="ACG72245.1"/>
    <property type="molecule type" value="Genomic_DNA"/>
</dbReference>
<dbReference type="RefSeq" id="WP_012525072.1">
    <property type="nucleotide sequence ID" value="NC_011145.1"/>
</dbReference>
<dbReference type="KEGG" id="ank:AnaeK_1010"/>
<dbReference type="HOGENOM" id="CLU_008142_4_2_7"/>
<dbReference type="OrthoDB" id="9805577at2"/>
<dbReference type="Proteomes" id="UP000001871">
    <property type="component" value="Chromosome"/>
</dbReference>
<dbReference type="GO" id="GO:0005886">
    <property type="term" value="C:plasma membrane"/>
    <property type="evidence" value="ECO:0007669"/>
    <property type="project" value="UniProtKB-SubCell"/>
</dbReference>
<dbReference type="GO" id="GO:0015079">
    <property type="term" value="F:potassium ion transmembrane transporter activity"/>
    <property type="evidence" value="ECO:0007669"/>
    <property type="project" value="UniProtKB-UniRule"/>
</dbReference>
<dbReference type="GO" id="GO:0015293">
    <property type="term" value="F:symporter activity"/>
    <property type="evidence" value="ECO:0007669"/>
    <property type="project" value="UniProtKB-UniRule"/>
</dbReference>
<dbReference type="HAMAP" id="MF_01522">
    <property type="entry name" value="Kup"/>
    <property type="match status" value="1"/>
</dbReference>
<dbReference type="InterPro" id="IPR003855">
    <property type="entry name" value="K+_transporter"/>
</dbReference>
<dbReference type="InterPro" id="IPR053952">
    <property type="entry name" value="K_trans_C"/>
</dbReference>
<dbReference type="InterPro" id="IPR053951">
    <property type="entry name" value="K_trans_N"/>
</dbReference>
<dbReference type="InterPro" id="IPR023051">
    <property type="entry name" value="Kup"/>
</dbReference>
<dbReference type="PANTHER" id="PTHR30540:SF79">
    <property type="entry name" value="LOW AFFINITY POTASSIUM TRANSPORT SYSTEM PROTEIN KUP"/>
    <property type="match status" value="1"/>
</dbReference>
<dbReference type="PANTHER" id="PTHR30540">
    <property type="entry name" value="OSMOTIC STRESS POTASSIUM TRANSPORTER"/>
    <property type="match status" value="1"/>
</dbReference>
<dbReference type="Pfam" id="PF02705">
    <property type="entry name" value="K_trans"/>
    <property type="match status" value="1"/>
</dbReference>
<dbReference type="Pfam" id="PF22776">
    <property type="entry name" value="K_trans_C"/>
    <property type="match status" value="1"/>
</dbReference>
<proteinExistence type="inferred from homology"/>
<keyword id="KW-0997">Cell inner membrane</keyword>
<keyword id="KW-1003">Cell membrane</keyword>
<keyword id="KW-0406">Ion transport</keyword>
<keyword id="KW-0472">Membrane</keyword>
<keyword id="KW-0630">Potassium</keyword>
<keyword id="KW-0633">Potassium transport</keyword>
<keyword id="KW-0769">Symport</keyword>
<keyword id="KW-0812">Transmembrane</keyword>
<keyword id="KW-1133">Transmembrane helix</keyword>
<keyword id="KW-0813">Transport</keyword>
<accession>B4UFX7</accession>
<protein>
    <recommendedName>
        <fullName evidence="1">Probable potassium transport system protein Kup</fullName>
    </recommendedName>
</protein>
<feature type="chain" id="PRO_1000190259" description="Probable potassium transport system protein Kup">
    <location>
        <begin position="1"/>
        <end position="671"/>
    </location>
</feature>
<feature type="transmembrane region" description="Helical" evidence="1">
    <location>
        <begin position="52"/>
        <end position="72"/>
    </location>
</feature>
<feature type="transmembrane region" description="Helical" evidence="1">
    <location>
        <begin position="92"/>
        <end position="112"/>
    </location>
</feature>
<feature type="transmembrane region" description="Helical" evidence="1">
    <location>
        <begin position="147"/>
        <end position="167"/>
    </location>
</feature>
<feature type="transmembrane region" description="Helical" evidence="1">
    <location>
        <begin position="181"/>
        <end position="201"/>
    </location>
</feature>
<feature type="transmembrane region" description="Helical" evidence="1">
    <location>
        <begin position="209"/>
        <end position="229"/>
    </location>
</feature>
<feature type="transmembrane region" description="Helical" evidence="1">
    <location>
        <begin position="255"/>
        <end position="275"/>
    </location>
</feature>
<feature type="transmembrane region" description="Helical" evidence="1">
    <location>
        <begin position="291"/>
        <end position="311"/>
    </location>
</feature>
<feature type="transmembrane region" description="Helical" evidence="1">
    <location>
        <begin position="323"/>
        <end position="343"/>
    </location>
</feature>
<feature type="transmembrane region" description="Helical" evidence="1">
    <location>
        <begin position="381"/>
        <end position="401"/>
    </location>
</feature>
<feature type="transmembrane region" description="Helical" evidence="1">
    <location>
        <begin position="407"/>
        <end position="427"/>
    </location>
</feature>
<feature type="transmembrane region" description="Helical" evidence="1">
    <location>
        <begin position="441"/>
        <end position="461"/>
    </location>
</feature>
<feature type="transmembrane region" description="Helical" evidence="1">
    <location>
        <begin position="465"/>
        <end position="485"/>
    </location>
</feature>
<feature type="region of interest" description="Disordered" evidence="2">
    <location>
        <begin position="1"/>
        <end position="43"/>
    </location>
</feature>
<feature type="compositionally biased region" description="Low complexity" evidence="2">
    <location>
        <begin position="10"/>
        <end position="37"/>
    </location>
</feature>
<sequence>MSQIPSPNDPASTGAAPSSAAVPAGPSATPAPSPTAGFSLPGHRPPPTGKALAALAVGALGVVYGDIGTSPLYSLKECFGGPHGVHPTDANVLGVLSLVFWAMTFVVTFKYMSFVMRADNRGEGGILALMALVGKTETTRLGRRMLLMLGLFGAALLYGDGIITPAISVLGAVEGVAVAAPAMERAVVPATVVILVFLFLFQKQGTAKVGAVFGPVMLVWFATIAVLGVRGILHDPTILRALLPTHGLSFFARNGWHGFLVLGGVVLVITGGEALYADMGHFGKRPIRVAWLGLAMPALLLNYLGQGALLLHDPGAARNPFYLLAPEWALYPTIAIATAAAIVASQALISGAYSLTQQAIQLGYSPRVTIRHTSQREIGQIYLPEVNWMLGTACLALVLGFQTSSRLASAYGIAVTGTMIVTTLLFHRVMRDRWGWARWKAWPLTSLFLTVDASFFLANVVKFRDGGWFPIAAAALVFTLMSTWKRGRDALALMLKDAGLPLDLFMADVARRKVQRVAGTAVFMTSNPGGVPPVLLHHLKHNKVLHERVVLVSILAHEIPFVNEPERVNARELGSGFFQVIAHYGFMETPDVPALLDSLPRRELAGPRITIVPMETTYFLGRETLLANGPSNIPTWRKRLFIVMARNAQTASAFFGLPPNRVVEMGAQIQL</sequence>
<reference key="1">
    <citation type="submission" date="2008-08" db="EMBL/GenBank/DDBJ databases">
        <title>Complete sequence of Anaeromyxobacter sp. K.</title>
        <authorList>
            <consortium name="US DOE Joint Genome Institute"/>
            <person name="Lucas S."/>
            <person name="Copeland A."/>
            <person name="Lapidus A."/>
            <person name="Glavina del Rio T."/>
            <person name="Dalin E."/>
            <person name="Tice H."/>
            <person name="Bruce D."/>
            <person name="Goodwin L."/>
            <person name="Pitluck S."/>
            <person name="Saunders E."/>
            <person name="Brettin T."/>
            <person name="Detter J.C."/>
            <person name="Han C."/>
            <person name="Larimer F."/>
            <person name="Land M."/>
            <person name="Hauser L."/>
            <person name="Kyrpides N."/>
            <person name="Ovchinnikiva G."/>
            <person name="Beliaev A."/>
        </authorList>
    </citation>
    <scope>NUCLEOTIDE SEQUENCE [LARGE SCALE GENOMIC DNA]</scope>
    <source>
        <strain>K</strain>
    </source>
</reference>